<name>POPD2_MOUSE</name>
<protein>
    <recommendedName>
        <fullName>Popeye domain-containing protein 2</fullName>
        <shortName>Popeye protein 2</shortName>
    </recommendedName>
</protein>
<sequence>MSANGSSVAQLLWQPPVCRSWKPDVEGAVYHLANCFLLMGFMAGSGVYGCFYLFGILGPGYLCCVLWGWFDACGLDIVLWNVLLTVACLLQLAQLVYRVRVNTLPEEFNLLYRTLCLPLQVPLQVYKEIVHCCHEQVLTLATEQTYAVEGETPINRLSLLLSGRVRVSQDGQFLHYIFPYQFMDSPEWESLHPSEEGTFQVTLTAETECSYISWPRKNLYLLLNRERYISRLFSALLGYDISEKLYTLNDKLFAKFGLRFDIRLPSLYHVLSPSASDGEPESEKDDEEALEAAVSPAQARPICIVPTPPCSAPPATTNFPVPLPRARMPRMPRPDSGNLASRRPLQNSSQVMSRSQAPLAPIHTPEL</sequence>
<keyword id="KW-0114">cAMP</keyword>
<keyword id="KW-0116">cAMP-binding</keyword>
<keyword id="KW-1003">Cell membrane</keyword>
<keyword id="KW-0325">Glycoprotein</keyword>
<keyword id="KW-0472">Membrane</keyword>
<keyword id="KW-0547">Nucleotide-binding</keyword>
<keyword id="KW-0597">Phosphoprotein</keyword>
<keyword id="KW-1185">Reference proteome</keyword>
<keyword id="KW-0812">Transmembrane</keyword>
<keyword id="KW-1133">Transmembrane helix</keyword>
<reference key="1">
    <citation type="journal article" date="2000" name="Dev. Biol.">
        <title>Isolation and characterization of the novel popeye gene family expressed in skeletal muscle and heart.</title>
        <authorList>
            <person name="Andree B."/>
            <person name="Hillemann T."/>
            <person name="Kessler-Icekson G."/>
            <person name="Schmitt-John T."/>
            <person name="Jockusch H."/>
            <person name="Arnold H.-H."/>
            <person name="Brand T."/>
        </authorList>
    </citation>
    <scope>NUCLEOTIDE SEQUENCE [MRNA]</scope>
    <scope>POSSIBLE FUNCTION</scope>
    <scope>DEVELOPMENTAL STAGE</scope>
    <scope>TISSUE SPECIFICITY</scope>
</reference>
<reference key="2">
    <citation type="journal article" date="2010" name="Cell">
        <title>A tissue-specific atlas of mouse protein phosphorylation and expression.</title>
        <authorList>
            <person name="Huttlin E.L."/>
            <person name="Jedrychowski M.P."/>
            <person name="Elias J.E."/>
            <person name="Goswami T."/>
            <person name="Rad R."/>
            <person name="Beausoleil S.A."/>
            <person name="Villen J."/>
            <person name="Haas W."/>
            <person name="Sowa M.E."/>
            <person name="Gygi S.P."/>
        </authorList>
    </citation>
    <scope>PHOSPHORYLATION [LARGE SCALE ANALYSIS] AT THR-364</scope>
    <scope>IDENTIFICATION BY MASS SPECTROMETRY [LARGE SCALE ANALYSIS]</scope>
    <source>
        <tissue>Heart</tissue>
    </source>
</reference>
<reference key="3">
    <citation type="journal article" date="2012" name="J. Clin. Invest.">
        <title>Popeye domain containing proteins are essential for stress-mediated modulation of cardiac pacemaking in mice.</title>
        <authorList>
            <person name="Froese A."/>
            <person name="Breher S.S."/>
            <person name="Waldeyer C."/>
            <person name="Schindler R.F."/>
            <person name="Nikolaev V.O."/>
            <person name="Rinne S."/>
            <person name="Wischmeyer E."/>
            <person name="Schlueter J."/>
            <person name="Becher J."/>
            <person name="Simrick S."/>
            <person name="Vauti F."/>
            <person name="Kuhtz J."/>
            <person name="Meister P."/>
            <person name="Kreissl S."/>
            <person name="Torlopp A."/>
            <person name="Liebig S.K."/>
            <person name="Laakmann S."/>
            <person name="Mueller T.D."/>
            <person name="Neumann J."/>
            <person name="Stieber J."/>
            <person name="Ludwig A."/>
            <person name="Maier S.K."/>
            <person name="Decher N."/>
            <person name="Arnold H.H."/>
            <person name="Kirchhof P."/>
            <person name="Fabritz L."/>
            <person name="Brand T."/>
        </authorList>
    </citation>
    <scope>FUNCTION</scope>
    <scope>DISRUPTION PHENOTYPE</scope>
    <scope>CAMP-BINDING</scope>
    <scope>TISSUE SPECIFICITY</scope>
    <scope>MUTAGENESIS OF ASP-184</scope>
</reference>
<proteinExistence type="evidence at protein level"/>
<accession>Q9ES82</accession>
<evidence type="ECO:0000250" key="1">
    <source>
        <dbReference type="UniProtKB" id="Q6JWV8"/>
    </source>
</evidence>
<evidence type="ECO:0000250" key="2">
    <source>
        <dbReference type="UniProtKB" id="Q9HBU9"/>
    </source>
</evidence>
<evidence type="ECO:0000255" key="3"/>
<evidence type="ECO:0000256" key="4">
    <source>
        <dbReference type="SAM" id="MobiDB-lite"/>
    </source>
</evidence>
<evidence type="ECO:0000269" key="5">
    <source>
    </source>
</evidence>
<evidence type="ECO:0000269" key="6">
    <source>
    </source>
</evidence>
<evidence type="ECO:0000305" key="7"/>
<evidence type="ECO:0007744" key="8">
    <source>
    </source>
</evidence>
<dbReference type="EMBL" id="AF204175">
    <property type="protein sequence ID" value="AAG23408.1"/>
    <property type="molecule type" value="mRNA"/>
</dbReference>
<dbReference type="CCDS" id="CCDS37342.1"/>
<dbReference type="RefSeq" id="NP_071713.1">
    <property type="nucleotide sequence ID" value="NM_022318.3"/>
</dbReference>
<dbReference type="SMR" id="Q9ES82"/>
<dbReference type="FunCoup" id="Q9ES82">
    <property type="interactions" value="621"/>
</dbReference>
<dbReference type="STRING" id="10090.ENSMUSP00000023494"/>
<dbReference type="GlyCosmos" id="Q9ES82">
    <property type="glycosylation" value="2 sites, No reported glycans"/>
</dbReference>
<dbReference type="GlyGen" id="Q9ES82">
    <property type="glycosylation" value="3 sites"/>
</dbReference>
<dbReference type="iPTMnet" id="Q9ES82"/>
<dbReference type="PhosphoSitePlus" id="Q9ES82"/>
<dbReference type="PaxDb" id="10090-ENSMUSP00000023494"/>
<dbReference type="ProteomicsDB" id="289790"/>
<dbReference type="Antibodypedia" id="16586">
    <property type="antibodies" value="60 antibodies from 14 providers"/>
</dbReference>
<dbReference type="DNASU" id="64082"/>
<dbReference type="Ensembl" id="ENSMUST00000114739.2">
    <property type="protein sequence ID" value="ENSMUSP00000110387.2"/>
    <property type="gene ID" value="ENSMUSG00000022803.13"/>
</dbReference>
<dbReference type="GeneID" id="64082"/>
<dbReference type="KEGG" id="mmu:64082"/>
<dbReference type="UCSC" id="uc007zeu.2">
    <property type="organism name" value="mouse"/>
</dbReference>
<dbReference type="AGR" id="MGI:1930150"/>
<dbReference type="CTD" id="64091"/>
<dbReference type="MGI" id="MGI:1930150">
    <property type="gene designation" value="Popdc2"/>
</dbReference>
<dbReference type="VEuPathDB" id="HostDB:ENSMUSG00000022803"/>
<dbReference type="eggNOG" id="ENOG502R0XG">
    <property type="taxonomic scope" value="Eukaryota"/>
</dbReference>
<dbReference type="GeneTree" id="ENSGT00390000002563"/>
<dbReference type="HOGENOM" id="CLU_048494_2_0_1"/>
<dbReference type="InParanoid" id="Q9ES82"/>
<dbReference type="OrthoDB" id="425611at2759"/>
<dbReference type="PhylomeDB" id="Q9ES82"/>
<dbReference type="BioGRID-ORCS" id="64082">
    <property type="hits" value="1 hit in 60 CRISPR screens"/>
</dbReference>
<dbReference type="ChiTaRS" id="Cnot7">
    <property type="organism name" value="mouse"/>
</dbReference>
<dbReference type="PRO" id="PR:Q9ES82"/>
<dbReference type="Proteomes" id="UP000000589">
    <property type="component" value="Chromosome 16"/>
</dbReference>
<dbReference type="RNAct" id="Q9ES82">
    <property type="molecule type" value="protein"/>
</dbReference>
<dbReference type="Bgee" id="ENSMUSG00000022803">
    <property type="expression patterns" value="Expressed in interventricular septum and 118 other cell types or tissues"/>
</dbReference>
<dbReference type="ExpressionAtlas" id="Q9ES82">
    <property type="expression patterns" value="baseline and differential"/>
</dbReference>
<dbReference type="GO" id="GO:0016020">
    <property type="term" value="C:membrane"/>
    <property type="evidence" value="ECO:0000314"/>
    <property type="project" value="MGI"/>
</dbReference>
<dbReference type="GO" id="GO:0042383">
    <property type="term" value="C:sarcolemma"/>
    <property type="evidence" value="ECO:0000250"/>
    <property type="project" value="UniProtKB"/>
</dbReference>
<dbReference type="GO" id="GO:0030552">
    <property type="term" value="F:cAMP binding"/>
    <property type="evidence" value="ECO:0000314"/>
    <property type="project" value="MGI"/>
</dbReference>
<dbReference type="GO" id="GO:0002027">
    <property type="term" value="P:regulation of heart rate"/>
    <property type="evidence" value="ECO:0000315"/>
    <property type="project" value="MGI"/>
</dbReference>
<dbReference type="GO" id="GO:0042391">
    <property type="term" value="P:regulation of membrane potential"/>
    <property type="evidence" value="ECO:0000316"/>
    <property type="project" value="MGI"/>
</dbReference>
<dbReference type="GO" id="GO:0060931">
    <property type="term" value="P:sinoatrial node cell development"/>
    <property type="evidence" value="ECO:0000315"/>
    <property type="project" value="MGI"/>
</dbReference>
<dbReference type="Gene3D" id="2.60.120.10">
    <property type="entry name" value="Jelly Rolls"/>
    <property type="match status" value="1"/>
</dbReference>
<dbReference type="InterPro" id="IPR018490">
    <property type="entry name" value="cNMP-bd_dom_sf"/>
</dbReference>
<dbReference type="InterPro" id="IPR006916">
    <property type="entry name" value="POPDC1-3"/>
</dbReference>
<dbReference type="InterPro" id="IPR055272">
    <property type="entry name" value="POPDC1-3_dom"/>
</dbReference>
<dbReference type="InterPro" id="IPR014710">
    <property type="entry name" value="RmlC-like_jellyroll"/>
</dbReference>
<dbReference type="PANTHER" id="PTHR12101">
    <property type="entry name" value="POPEYE DOMAIN CONTAINING PROTEIN"/>
    <property type="match status" value="1"/>
</dbReference>
<dbReference type="PANTHER" id="PTHR12101:SF15">
    <property type="entry name" value="POPEYE DOMAIN-CONTAINING PROTEIN 2"/>
    <property type="match status" value="1"/>
</dbReference>
<dbReference type="Pfam" id="PF04831">
    <property type="entry name" value="POPDC1-3"/>
    <property type="match status" value="1"/>
</dbReference>
<dbReference type="SUPFAM" id="SSF51206">
    <property type="entry name" value="cAMP-binding domain-like"/>
    <property type="match status" value="1"/>
</dbReference>
<feature type="chain" id="PRO_0000046794" description="Popeye domain-containing protein 2">
    <location>
        <begin position="1"/>
        <end position="367"/>
    </location>
</feature>
<feature type="transmembrane region" description="Helical" evidence="3">
    <location>
        <begin position="36"/>
        <end position="56"/>
    </location>
</feature>
<feature type="transmembrane region" description="Helical" evidence="3">
    <location>
        <begin position="77"/>
        <end position="97"/>
    </location>
</feature>
<feature type="region of interest" description="Disordered" evidence="4">
    <location>
        <begin position="273"/>
        <end position="292"/>
    </location>
</feature>
<feature type="region of interest" description="Disordered" evidence="4">
    <location>
        <begin position="312"/>
        <end position="367"/>
    </location>
</feature>
<feature type="compositionally biased region" description="Acidic residues" evidence="4">
    <location>
        <begin position="278"/>
        <end position="290"/>
    </location>
</feature>
<feature type="compositionally biased region" description="Polar residues" evidence="4">
    <location>
        <begin position="344"/>
        <end position="356"/>
    </location>
</feature>
<feature type="modified residue" description="Phosphothreonine" evidence="8">
    <location>
        <position position="364"/>
    </location>
</feature>
<feature type="glycosylation site" description="N-linked (GlcNAc...) asparagine" evidence="3">
    <location>
        <position position="4"/>
    </location>
</feature>
<feature type="glycosylation site" description="N-linked (GlcNAc...) asparagine" evidence="3">
    <location>
        <position position="347"/>
    </location>
</feature>
<feature type="mutagenesis site" description="Almost abolishes cAMP-binding." evidence="6">
    <original>D</original>
    <variation>A</variation>
    <location>
        <position position="184"/>
    </location>
</feature>
<organism>
    <name type="scientific">Mus musculus</name>
    <name type="common">Mouse</name>
    <dbReference type="NCBI Taxonomy" id="10090"/>
    <lineage>
        <taxon>Eukaryota</taxon>
        <taxon>Metazoa</taxon>
        <taxon>Chordata</taxon>
        <taxon>Craniata</taxon>
        <taxon>Vertebrata</taxon>
        <taxon>Euteleostomi</taxon>
        <taxon>Mammalia</taxon>
        <taxon>Eutheria</taxon>
        <taxon>Euarchontoglires</taxon>
        <taxon>Glires</taxon>
        <taxon>Rodentia</taxon>
        <taxon>Myomorpha</taxon>
        <taxon>Muroidea</taxon>
        <taxon>Muridae</taxon>
        <taxon>Murinae</taxon>
        <taxon>Mus</taxon>
        <taxon>Mus</taxon>
    </lineage>
</organism>
<comment type="function">
    <text evidence="1 6">Important for the maintenance of cardiac function. Plays a regulatory function in heart rate dynamics mediated, at least in part, through cAMP-binding and, probably, by increasing cell surface expression of the potassium channel KCNK2 and enhancing current density.</text>
</comment>
<comment type="subcellular location">
    <subcellularLocation>
        <location evidence="7">Membrane</location>
        <topology evidence="7">Multi-pass membrane protein</topology>
    </subcellularLocation>
    <subcellularLocation>
        <location evidence="2">Cell membrane</location>
        <location evidence="2">Sarcolemma</location>
    </subcellularLocation>
</comment>
<comment type="tissue specificity">
    <text evidence="5 6">Expressed in the developing and adult heart, with high expression levels in the sinus and atrioventricular nodes. Also expressed in the bladder and skeletal muscle.</text>
</comment>
<comment type="developmental stage">
    <text evidence="5">Expression was first detected at 7.5 dpc in the cardiac crescent. Expression was observed in the myocardial layer but not in the endocardium. Expression was homogeneous in all heart segments with the exception of the outflow tract. Between 9.5 dpc and 10.5 dpc expression was also observed in the trabeculated areas. In more advanced stages of myocardial differentiation, expression in the ventricle was largely restricted to the compact layer.</text>
</comment>
<comment type="disruption phenotype">
    <text evidence="6">Knockout mice are deficient to adapt heart rate to physiological stress, this deficiency develops in older mice. They show severe sinus node dysfunction with long pauses and intercurrent periods of normal synus rhythm. The sinus node structure is abnormal with a loss of pacemaker tissue from the inferior part of the sinus node and a compact structure of the superior sinus node.</text>
</comment>
<comment type="similarity">
    <text evidence="7">Belongs to the popeye family.</text>
</comment>
<gene>
    <name type="primary">Popdc2</name>
    <name type="synonym">Pop2</name>
</gene>